<sequence length="911" mass="102878">MFAPLLKKLFGSKNEREVKRMLKAVQSVNALEEQMIALSDEQLRGKTEEFKARLAKGETLDQLLAEAFAVAREAGKRVMGMRHFDVQLIGGMTLHEGKIAEMRTGEGKTLVGTLAVYLNALSGKGVHVVTVNEYLARRDANWMRPLYEFLGLTVGIVTPFQPPEEKRAAYAADITYGTNNEFGFDYLRDNMAFSLEDKFQRELNFAVIDEVDSILIDEARTPLIISGQAEDSSKLYTEINRLIPRLKQHIEEEEGVVTQEGHYKVDEKSRQVELNEAGHQYVEEMLTAAGLLAEGESLYSAHNLGLLTHVYAGLRAHTLFNRNVEYIVQNGQVILIDEHTGRTMPGRRLSEGLHQAIEAKEGVNIQAESQTLASTTFQNYFRLYNKLSGMTGTADTEAFEFRQIYGLDVVVIPTNKPIARKDFNDLVYLTQEEKYQAIITDIKDCQAQGRPILVGTASIETSEYVSQLLQKEKIEHKVLNAKYHDKEAEIIAQAGRPGAVTIATNMAGRGTDILLGGNWEVEVAALENPTDEQIAQIKTEWQKRHQQVIEAGGLHVIASERHESRRIDNQLRGRAGRQGDPGSSRFYLSLEDNLMRIFASDRVKNFMKALGMQSGEAIEHRMVTNAIEKAQRKVEGRNFDMRKQLLEFDDVANEQRKVIYHMRNSLLAAENVGDTIAEFREEVLTAAINGHIPPQSMPEQWDVAGLESTLQSDFGLKLPIQQWLDEDDKLYEETLRERILAELVAAYNEKETQASAEALRTFEKQILLRVLDDLWKDHLSTMDHLRHGIHLRGYAQKNPKQEYKRESFALFQELLESIKRDTIRVLSHVQVRREDPAEEEARLRREAEALAERMQFQHAEASALAAEQDGAEEGAVATATAPVRSENKVGRNEPCPCGSGKKYKHCHGQIN</sequence>
<evidence type="ECO:0000255" key="1">
    <source>
        <dbReference type="HAMAP-Rule" id="MF_01382"/>
    </source>
</evidence>
<evidence type="ECO:0000256" key="2">
    <source>
        <dbReference type="SAM" id="MobiDB-lite"/>
    </source>
</evidence>
<evidence type="ECO:0000305" key="3"/>
<accession>A4XQT3</accession>
<gene>
    <name evidence="1" type="primary">secA</name>
    <name type="ordered locus">Pmen_0931</name>
</gene>
<organism>
    <name type="scientific">Ectopseudomonas mendocina (strain ymp)</name>
    <name type="common">Pseudomonas mendocina</name>
    <dbReference type="NCBI Taxonomy" id="399739"/>
    <lineage>
        <taxon>Bacteria</taxon>
        <taxon>Pseudomonadati</taxon>
        <taxon>Pseudomonadota</taxon>
        <taxon>Gammaproteobacteria</taxon>
        <taxon>Pseudomonadales</taxon>
        <taxon>Pseudomonadaceae</taxon>
        <taxon>Ectopseudomonas</taxon>
    </lineage>
</organism>
<keyword id="KW-0067">ATP-binding</keyword>
<keyword id="KW-0997">Cell inner membrane</keyword>
<keyword id="KW-1003">Cell membrane</keyword>
<keyword id="KW-0963">Cytoplasm</keyword>
<keyword id="KW-0472">Membrane</keyword>
<keyword id="KW-0479">Metal-binding</keyword>
<keyword id="KW-0547">Nucleotide-binding</keyword>
<keyword id="KW-0653">Protein transport</keyword>
<keyword id="KW-1278">Translocase</keyword>
<keyword id="KW-0811">Translocation</keyword>
<keyword id="KW-0813">Transport</keyword>
<keyword id="KW-0862">Zinc</keyword>
<proteinExistence type="inferred from homology"/>
<reference key="1">
    <citation type="submission" date="2007-04" db="EMBL/GenBank/DDBJ databases">
        <title>Complete sequence of Pseudomonas mendocina ymp.</title>
        <authorList>
            <consortium name="US DOE Joint Genome Institute"/>
            <person name="Copeland A."/>
            <person name="Lucas S."/>
            <person name="Lapidus A."/>
            <person name="Barry K."/>
            <person name="Glavina del Rio T."/>
            <person name="Dalin E."/>
            <person name="Tice H."/>
            <person name="Pitluck S."/>
            <person name="Kiss H."/>
            <person name="Brettin T."/>
            <person name="Detter J.C."/>
            <person name="Bruce D."/>
            <person name="Han C."/>
            <person name="Schmutz J."/>
            <person name="Larimer F."/>
            <person name="Land M."/>
            <person name="Hauser L."/>
            <person name="Kyrpides N."/>
            <person name="Mikhailova N."/>
            <person name="Hersman L."/>
            <person name="Dubois J."/>
            <person name="Maurice P."/>
            <person name="Richardson P."/>
        </authorList>
    </citation>
    <scope>NUCLEOTIDE SEQUENCE [LARGE SCALE GENOMIC DNA]</scope>
    <source>
        <strain>ymp</strain>
    </source>
</reference>
<feature type="chain" id="PRO_0000320899" description="Protein translocase subunit SecA">
    <location>
        <begin position="1"/>
        <end position="911"/>
    </location>
</feature>
<feature type="region of interest" description="Disordered" evidence="2">
    <location>
        <begin position="865"/>
        <end position="892"/>
    </location>
</feature>
<feature type="compositionally biased region" description="Low complexity" evidence="2">
    <location>
        <begin position="873"/>
        <end position="883"/>
    </location>
</feature>
<feature type="binding site" evidence="1">
    <location>
        <position position="87"/>
    </location>
    <ligand>
        <name>ATP</name>
        <dbReference type="ChEBI" id="CHEBI:30616"/>
    </ligand>
</feature>
<feature type="binding site" evidence="1">
    <location>
        <begin position="105"/>
        <end position="109"/>
    </location>
    <ligand>
        <name>ATP</name>
        <dbReference type="ChEBI" id="CHEBI:30616"/>
    </ligand>
</feature>
<feature type="binding site" evidence="1">
    <location>
        <position position="512"/>
    </location>
    <ligand>
        <name>ATP</name>
        <dbReference type="ChEBI" id="CHEBI:30616"/>
    </ligand>
</feature>
<feature type="binding site" evidence="1">
    <location>
        <position position="895"/>
    </location>
    <ligand>
        <name>Zn(2+)</name>
        <dbReference type="ChEBI" id="CHEBI:29105"/>
    </ligand>
</feature>
<feature type="binding site" evidence="1">
    <location>
        <position position="897"/>
    </location>
    <ligand>
        <name>Zn(2+)</name>
        <dbReference type="ChEBI" id="CHEBI:29105"/>
    </ligand>
</feature>
<feature type="binding site" evidence="1">
    <location>
        <position position="906"/>
    </location>
    <ligand>
        <name>Zn(2+)</name>
        <dbReference type="ChEBI" id="CHEBI:29105"/>
    </ligand>
</feature>
<feature type="binding site" evidence="1">
    <location>
        <position position="907"/>
    </location>
    <ligand>
        <name>Zn(2+)</name>
        <dbReference type="ChEBI" id="CHEBI:29105"/>
    </ligand>
</feature>
<name>SECA_ECTM1</name>
<dbReference type="EC" id="7.4.2.8" evidence="1"/>
<dbReference type="EMBL" id="CP000680">
    <property type="protein sequence ID" value="ABP83699.1"/>
    <property type="status" value="ALT_INIT"/>
    <property type="molecule type" value="Genomic_DNA"/>
</dbReference>
<dbReference type="SMR" id="A4XQT3"/>
<dbReference type="STRING" id="399739.Pmen_0931"/>
<dbReference type="KEGG" id="pmy:Pmen_0931"/>
<dbReference type="PATRIC" id="fig|399739.8.peg.940"/>
<dbReference type="eggNOG" id="COG0653">
    <property type="taxonomic scope" value="Bacteria"/>
</dbReference>
<dbReference type="HOGENOM" id="CLU_005314_3_0_6"/>
<dbReference type="OrthoDB" id="9805579at2"/>
<dbReference type="GO" id="GO:0031522">
    <property type="term" value="C:cell envelope Sec protein transport complex"/>
    <property type="evidence" value="ECO:0007669"/>
    <property type="project" value="TreeGrafter"/>
</dbReference>
<dbReference type="GO" id="GO:0005829">
    <property type="term" value="C:cytosol"/>
    <property type="evidence" value="ECO:0007669"/>
    <property type="project" value="TreeGrafter"/>
</dbReference>
<dbReference type="GO" id="GO:0005886">
    <property type="term" value="C:plasma membrane"/>
    <property type="evidence" value="ECO:0007669"/>
    <property type="project" value="UniProtKB-SubCell"/>
</dbReference>
<dbReference type="GO" id="GO:0005524">
    <property type="term" value="F:ATP binding"/>
    <property type="evidence" value="ECO:0007669"/>
    <property type="project" value="UniProtKB-UniRule"/>
</dbReference>
<dbReference type="GO" id="GO:0046872">
    <property type="term" value="F:metal ion binding"/>
    <property type="evidence" value="ECO:0007669"/>
    <property type="project" value="UniProtKB-KW"/>
</dbReference>
<dbReference type="GO" id="GO:0008564">
    <property type="term" value="F:protein-exporting ATPase activity"/>
    <property type="evidence" value="ECO:0007669"/>
    <property type="project" value="UniProtKB-EC"/>
</dbReference>
<dbReference type="GO" id="GO:0065002">
    <property type="term" value="P:intracellular protein transmembrane transport"/>
    <property type="evidence" value="ECO:0007669"/>
    <property type="project" value="UniProtKB-UniRule"/>
</dbReference>
<dbReference type="GO" id="GO:0017038">
    <property type="term" value="P:protein import"/>
    <property type="evidence" value="ECO:0007669"/>
    <property type="project" value="InterPro"/>
</dbReference>
<dbReference type="GO" id="GO:0006605">
    <property type="term" value="P:protein targeting"/>
    <property type="evidence" value="ECO:0007669"/>
    <property type="project" value="UniProtKB-UniRule"/>
</dbReference>
<dbReference type="GO" id="GO:0043952">
    <property type="term" value="P:protein transport by the Sec complex"/>
    <property type="evidence" value="ECO:0007669"/>
    <property type="project" value="TreeGrafter"/>
</dbReference>
<dbReference type="CDD" id="cd17928">
    <property type="entry name" value="DEXDc_SecA"/>
    <property type="match status" value="1"/>
</dbReference>
<dbReference type="CDD" id="cd18803">
    <property type="entry name" value="SF2_C_secA"/>
    <property type="match status" value="1"/>
</dbReference>
<dbReference type="FunFam" id="3.40.50.300:FF:000081">
    <property type="entry name" value="Preprotein translocase subunit SecA"/>
    <property type="match status" value="1"/>
</dbReference>
<dbReference type="FunFam" id="3.40.50.300:FF:000113">
    <property type="entry name" value="Preprotein translocase subunit SecA"/>
    <property type="match status" value="1"/>
</dbReference>
<dbReference type="FunFam" id="3.90.1440.10:FF:000001">
    <property type="entry name" value="Preprotein translocase subunit SecA"/>
    <property type="match status" value="1"/>
</dbReference>
<dbReference type="FunFam" id="1.10.3060.10:FF:000003">
    <property type="entry name" value="Protein translocase subunit SecA"/>
    <property type="match status" value="1"/>
</dbReference>
<dbReference type="Gene3D" id="1.10.3060.10">
    <property type="entry name" value="Helical scaffold and wing domains of SecA"/>
    <property type="match status" value="1"/>
</dbReference>
<dbReference type="Gene3D" id="3.40.50.300">
    <property type="entry name" value="P-loop containing nucleotide triphosphate hydrolases"/>
    <property type="match status" value="2"/>
</dbReference>
<dbReference type="Gene3D" id="3.90.1440.10">
    <property type="entry name" value="SecA, preprotein cross-linking domain"/>
    <property type="match status" value="1"/>
</dbReference>
<dbReference type="HAMAP" id="MF_01382">
    <property type="entry name" value="SecA"/>
    <property type="match status" value="1"/>
</dbReference>
<dbReference type="InterPro" id="IPR014001">
    <property type="entry name" value="Helicase_ATP-bd"/>
</dbReference>
<dbReference type="InterPro" id="IPR001650">
    <property type="entry name" value="Helicase_C-like"/>
</dbReference>
<dbReference type="InterPro" id="IPR027417">
    <property type="entry name" value="P-loop_NTPase"/>
</dbReference>
<dbReference type="InterPro" id="IPR004027">
    <property type="entry name" value="SEC_C_motif"/>
</dbReference>
<dbReference type="InterPro" id="IPR000185">
    <property type="entry name" value="SecA"/>
</dbReference>
<dbReference type="InterPro" id="IPR020937">
    <property type="entry name" value="SecA_CS"/>
</dbReference>
<dbReference type="InterPro" id="IPR011115">
    <property type="entry name" value="SecA_DEAD"/>
</dbReference>
<dbReference type="InterPro" id="IPR014018">
    <property type="entry name" value="SecA_motor_DEAD"/>
</dbReference>
<dbReference type="InterPro" id="IPR011130">
    <property type="entry name" value="SecA_preprotein_X-link_dom"/>
</dbReference>
<dbReference type="InterPro" id="IPR044722">
    <property type="entry name" value="SecA_SF2_C"/>
</dbReference>
<dbReference type="InterPro" id="IPR011116">
    <property type="entry name" value="SecA_Wing/Scaffold"/>
</dbReference>
<dbReference type="InterPro" id="IPR036266">
    <property type="entry name" value="SecA_Wing/Scaffold_sf"/>
</dbReference>
<dbReference type="InterPro" id="IPR036670">
    <property type="entry name" value="SecA_X-link_sf"/>
</dbReference>
<dbReference type="NCBIfam" id="NF009538">
    <property type="entry name" value="PRK12904.1"/>
    <property type="match status" value="1"/>
</dbReference>
<dbReference type="NCBIfam" id="TIGR00963">
    <property type="entry name" value="secA"/>
    <property type="match status" value="1"/>
</dbReference>
<dbReference type="PANTHER" id="PTHR30612:SF0">
    <property type="entry name" value="CHLOROPLAST PROTEIN-TRANSPORTING ATPASE"/>
    <property type="match status" value="1"/>
</dbReference>
<dbReference type="PANTHER" id="PTHR30612">
    <property type="entry name" value="SECA INNER MEMBRANE COMPONENT OF SEC PROTEIN SECRETION SYSTEM"/>
    <property type="match status" value="1"/>
</dbReference>
<dbReference type="Pfam" id="PF21090">
    <property type="entry name" value="P-loop_SecA"/>
    <property type="match status" value="1"/>
</dbReference>
<dbReference type="Pfam" id="PF02810">
    <property type="entry name" value="SEC-C"/>
    <property type="match status" value="1"/>
</dbReference>
<dbReference type="Pfam" id="PF07517">
    <property type="entry name" value="SecA_DEAD"/>
    <property type="match status" value="1"/>
</dbReference>
<dbReference type="Pfam" id="PF01043">
    <property type="entry name" value="SecA_PP_bind"/>
    <property type="match status" value="1"/>
</dbReference>
<dbReference type="Pfam" id="PF07516">
    <property type="entry name" value="SecA_SW"/>
    <property type="match status" value="1"/>
</dbReference>
<dbReference type="PRINTS" id="PR00906">
    <property type="entry name" value="SECA"/>
</dbReference>
<dbReference type="SMART" id="SM00957">
    <property type="entry name" value="SecA_DEAD"/>
    <property type="match status" value="1"/>
</dbReference>
<dbReference type="SMART" id="SM00958">
    <property type="entry name" value="SecA_PP_bind"/>
    <property type="match status" value="1"/>
</dbReference>
<dbReference type="SUPFAM" id="SSF81886">
    <property type="entry name" value="Helical scaffold and wing domains of SecA"/>
    <property type="match status" value="1"/>
</dbReference>
<dbReference type="SUPFAM" id="SSF52540">
    <property type="entry name" value="P-loop containing nucleoside triphosphate hydrolases"/>
    <property type="match status" value="2"/>
</dbReference>
<dbReference type="SUPFAM" id="SSF81767">
    <property type="entry name" value="Pre-protein crosslinking domain of SecA"/>
    <property type="match status" value="1"/>
</dbReference>
<dbReference type="PROSITE" id="PS01312">
    <property type="entry name" value="SECA"/>
    <property type="match status" value="1"/>
</dbReference>
<dbReference type="PROSITE" id="PS51196">
    <property type="entry name" value="SECA_MOTOR_DEAD"/>
    <property type="match status" value="1"/>
</dbReference>
<protein>
    <recommendedName>
        <fullName evidence="1">Protein translocase subunit SecA</fullName>
        <ecNumber evidence="1">7.4.2.8</ecNumber>
    </recommendedName>
</protein>
<comment type="function">
    <text evidence="1">Part of the Sec protein translocase complex. Interacts with the SecYEG preprotein conducting channel. Has a central role in coupling the hydrolysis of ATP to the transfer of proteins into and across the cell membrane, serving both as a receptor for the preprotein-SecB complex and as an ATP-driven molecular motor driving the stepwise translocation of polypeptide chains across the membrane.</text>
</comment>
<comment type="catalytic activity">
    <reaction evidence="1">
        <text>ATP + H2O + cellular proteinSide 1 = ADP + phosphate + cellular proteinSide 2.</text>
        <dbReference type="EC" id="7.4.2.8"/>
    </reaction>
</comment>
<comment type="cofactor">
    <cofactor evidence="1">
        <name>Zn(2+)</name>
        <dbReference type="ChEBI" id="CHEBI:29105"/>
    </cofactor>
    <text evidence="1">May bind 1 zinc ion per subunit.</text>
</comment>
<comment type="subunit">
    <text evidence="1">Monomer and homodimer. Part of the essential Sec protein translocation apparatus which comprises SecA, SecYEG and auxiliary proteins SecDF-YajC and YidC.</text>
</comment>
<comment type="subcellular location">
    <subcellularLocation>
        <location evidence="1">Cell inner membrane</location>
        <topology evidence="1">Peripheral membrane protein</topology>
        <orientation evidence="1">Cytoplasmic side</orientation>
    </subcellularLocation>
    <subcellularLocation>
        <location evidence="1">Cytoplasm</location>
    </subcellularLocation>
    <text evidence="1">Distribution is 50-50.</text>
</comment>
<comment type="similarity">
    <text evidence="1">Belongs to the SecA family.</text>
</comment>
<comment type="sequence caution" evidence="3">
    <conflict type="erroneous initiation">
        <sequence resource="EMBL-CDS" id="ABP83699"/>
    </conflict>
    <text>Extended N-terminus.</text>
</comment>